<accession>Q1LQ34</accession>
<keyword id="KW-0067">ATP-binding</keyword>
<keyword id="KW-0963">Cytoplasm</keyword>
<keyword id="KW-0418">Kinase</keyword>
<keyword id="KW-0547">Nucleotide-binding</keyword>
<keyword id="KW-1185">Reference proteome</keyword>
<keyword id="KW-0808">Transferase</keyword>
<gene>
    <name evidence="1" type="primary">gmk</name>
    <name type="ordered locus">Rmet_0856</name>
</gene>
<sequence length="216" mass="24340">MSETTHTAIDTAYPGNLFMVVAPSGAGKSTLVNALLAQDKAIRLSISHTTRSPRPGEQNGREYHFISVDEFRAARDRGEFLEWAEVHGNYYATSRVWIEEQMAQGTDVLLEIDWQGAQQVHKRFSNAVEIFILPPSLTALEERLKKRGQDEPNVIVRRLLAAGSEMSHASESDYVIINEVFDDALKQLQNVVHATRLRFSSQKARHAELFIELGIH</sequence>
<name>KGUA_CUPMC</name>
<organism>
    <name type="scientific">Cupriavidus metallidurans (strain ATCC 43123 / DSM 2839 / NBRC 102507 / CH34)</name>
    <name type="common">Ralstonia metallidurans</name>
    <dbReference type="NCBI Taxonomy" id="266264"/>
    <lineage>
        <taxon>Bacteria</taxon>
        <taxon>Pseudomonadati</taxon>
        <taxon>Pseudomonadota</taxon>
        <taxon>Betaproteobacteria</taxon>
        <taxon>Burkholderiales</taxon>
        <taxon>Burkholderiaceae</taxon>
        <taxon>Cupriavidus</taxon>
    </lineage>
</organism>
<comment type="function">
    <text evidence="1">Essential for recycling GMP and indirectly, cGMP.</text>
</comment>
<comment type="catalytic activity">
    <reaction evidence="1">
        <text>GMP + ATP = GDP + ADP</text>
        <dbReference type="Rhea" id="RHEA:20780"/>
        <dbReference type="ChEBI" id="CHEBI:30616"/>
        <dbReference type="ChEBI" id="CHEBI:58115"/>
        <dbReference type="ChEBI" id="CHEBI:58189"/>
        <dbReference type="ChEBI" id="CHEBI:456216"/>
        <dbReference type="EC" id="2.7.4.8"/>
    </reaction>
</comment>
<comment type="subcellular location">
    <subcellularLocation>
        <location evidence="1">Cytoplasm</location>
    </subcellularLocation>
</comment>
<comment type="similarity">
    <text evidence="1">Belongs to the guanylate kinase family.</text>
</comment>
<feature type="chain" id="PRO_0000266378" description="Guanylate kinase">
    <location>
        <begin position="1"/>
        <end position="216"/>
    </location>
</feature>
<feature type="domain" description="Guanylate kinase-like" evidence="1">
    <location>
        <begin position="15"/>
        <end position="193"/>
    </location>
</feature>
<feature type="binding site" evidence="1">
    <location>
        <begin position="22"/>
        <end position="29"/>
    </location>
    <ligand>
        <name>ATP</name>
        <dbReference type="ChEBI" id="CHEBI:30616"/>
    </ligand>
</feature>
<reference key="1">
    <citation type="journal article" date="2010" name="PLoS ONE">
        <title>The complete genome sequence of Cupriavidus metallidurans strain CH34, a master survivalist in harsh and anthropogenic environments.</title>
        <authorList>
            <person name="Janssen P.J."/>
            <person name="Van Houdt R."/>
            <person name="Moors H."/>
            <person name="Monsieurs P."/>
            <person name="Morin N."/>
            <person name="Michaux A."/>
            <person name="Benotmane M.A."/>
            <person name="Leys N."/>
            <person name="Vallaeys T."/>
            <person name="Lapidus A."/>
            <person name="Monchy S."/>
            <person name="Medigue C."/>
            <person name="Taghavi S."/>
            <person name="McCorkle S."/>
            <person name="Dunn J."/>
            <person name="van der Lelie D."/>
            <person name="Mergeay M."/>
        </authorList>
    </citation>
    <scope>NUCLEOTIDE SEQUENCE [LARGE SCALE GENOMIC DNA]</scope>
    <source>
        <strain>ATCC 43123 / DSM 2839 / NBRC 102507 / CH34</strain>
    </source>
</reference>
<dbReference type="EC" id="2.7.4.8" evidence="1"/>
<dbReference type="EMBL" id="CP000352">
    <property type="protein sequence ID" value="ABF07742.1"/>
    <property type="molecule type" value="Genomic_DNA"/>
</dbReference>
<dbReference type="RefSeq" id="WP_011515683.1">
    <property type="nucleotide sequence ID" value="NC_007973.1"/>
</dbReference>
<dbReference type="SMR" id="Q1LQ34"/>
<dbReference type="STRING" id="266264.Rmet_0856"/>
<dbReference type="KEGG" id="rme:Rmet_0856"/>
<dbReference type="eggNOG" id="COG0194">
    <property type="taxonomic scope" value="Bacteria"/>
</dbReference>
<dbReference type="HOGENOM" id="CLU_001715_1_0_4"/>
<dbReference type="Proteomes" id="UP000002429">
    <property type="component" value="Chromosome"/>
</dbReference>
<dbReference type="GO" id="GO:0005829">
    <property type="term" value="C:cytosol"/>
    <property type="evidence" value="ECO:0007669"/>
    <property type="project" value="TreeGrafter"/>
</dbReference>
<dbReference type="GO" id="GO:0005524">
    <property type="term" value="F:ATP binding"/>
    <property type="evidence" value="ECO:0007669"/>
    <property type="project" value="UniProtKB-UniRule"/>
</dbReference>
<dbReference type="GO" id="GO:0004385">
    <property type="term" value="F:guanylate kinase activity"/>
    <property type="evidence" value="ECO:0007669"/>
    <property type="project" value="UniProtKB-UniRule"/>
</dbReference>
<dbReference type="CDD" id="cd00071">
    <property type="entry name" value="GMPK"/>
    <property type="match status" value="1"/>
</dbReference>
<dbReference type="FunFam" id="3.30.63.10:FF:000002">
    <property type="entry name" value="Guanylate kinase 1"/>
    <property type="match status" value="1"/>
</dbReference>
<dbReference type="Gene3D" id="3.30.63.10">
    <property type="entry name" value="Guanylate Kinase phosphate binding domain"/>
    <property type="match status" value="1"/>
</dbReference>
<dbReference type="Gene3D" id="3.40.50.300">
    <property type="entry name" value="P-loop containing nucleotide triphosphate hydrolases"/>
    <property type="match status" value="1"/>
</dbReference>
<dbReference type="HAMAP" id="MF_00328">
    <property type="entry name" value="Guanylate_kinase"/>
    <property type="match status" value="1"/>
</dbReference>
<dbReference type="InterPro" id="IPR008145">
    <property type="entry name" value="GK/Ca_channel_bsu"/>
</dbReference>
<dbReference type="InterPro" id="IPR008144">
    <property type="entry name" value="Guanylate_kin-like_dom"/>
</dbReference>
<dbReference type="InterPro" id="IPR017665">
    <property type="entry name" value="Guanylate_kinase"/>
</dbReference>
<dbReference type="InterPro" id="IPR020590">
    <property type="entry name" value="Guanylate_kinase_CS"/>
</dbReference>
<dbReference type="InterPro" id="IPR027417">
    <property type="entry name" value="P-loop_NTPase"/>
</dbReference>
<dbReference type="NCBIfam" id="TIGR03263">
    <property type="entry name" value="guanyl_kin"/>
    <property type="match status" value="1"/>
</dbReference>
<dbReference type="PANTHER" id="PTHR23117:SF13">
    <property type="entry name" value="GUANYLATE KINASE"/>
    <property type="match status" value="1"/>
</dbReference>
<dbReference type="PANTHER" id="PTHR23117">
    <property type="entry name" value="GUANYLATE KINASE-RELATED"/>
    <property type="match status" value="1"/>
</dbReference>
<dbReference type="Pfam" id="PF00625">
    <property type="entry name" value="Guanylate_kin"/>
    <property type="match status" value="1"/>
</dbReference>
<dbReference type="SMART" id="SM00072">
    <property type="entry name" value="GuKc"/>
    <property type="match status" value="1"/>
</dbReference>
<dbReference type="SUPFAM" id="SSF52540">
    <property type="entry name" value="P-loop containing nucleoside triphosphate hydrolases"/>
    <property type="match status" value="1"/>
</dbReference>
<dbReference type="PROSITE" id="PS00856">
    <property type="entry name" value="GUANYLATE_KINASE_1"/>
    <property type="match status" value="1"/>
</dbReference>
<dbReference type="PROSITE" id="PS50052">
    <property type="entry name" value="GUANYLATE_KINASE_2"/>
    <property type="match status" value="1"/>
</dbReference>
<protein>
    <recommendedName>
        <fullName evidence="1">Guanylate kinase</fullName>
        <ecNumber evidence="1">2.7.4.8</ecNumber>
    </recommendedName>
    <alternativeName>
        <fullName evidence="1">GMP kinase</fullName>
    </alternativeName>
</protein>
<evidence type="ECO:0000255" key="1">
    <source>
        <dbReference type="HAMAP-Rule" id="MF_00328"/>
    </source>
</evidence>
<proteinExistence type="inferred from homology"/>